<protein>
    <recommendedName>
        <fullName evidence="1">Crossover junction endodeoxyribonuclease RuvC</fullName>
        <ecNumber evidence="1">3.1.21.10</ecNumber>
    </recommendedName>
    <alternativeName>
        <fullName evidence="1">Holliday junction nuclease RuvC</fullName>
    </alternativeName>
    <alternativeName>
        <fullName evidence="1">Holliday junction resolvase RuvC</fullName>
    </alternativeName>
</protein>
<comment type="function">
    <text evidence="1">The RuvA-RuvB-RuvC complex processes Holliday junction (HJ) DNA during genetic recombination and DNA repair. Endonuclease that resolves HJ intermediates. Cleaves cruciform DNA by making single-stranded nicks across the HJ at symmetrical positions within the homologous arms, yielding a 5'-phosphate and a 3'-hydroxyl group; requires a central core of homology in the junction. The consensus cleavage sequence is 5'-(A/T)TT(C/G)-3'. Cleavage occurs on the 3'-side of the TT dinucleotide at the point of strand exchange. HJ branch migration catalyzed by RuvA-RuvB allows RuvC to scan DNA until it finds its consensus sequence, where it cleaves and resolves the cruciform DNA.</text>
</comment>
<comment type="catalytic activity">
    <reaction evidence="1">
        <text>Endonucleolytic cleavage at a junction such as a reciprocal single-stranded crossover between two homologous DNA duplexes (Holliday junction).</text>
        <dbReference type="EC" id="3.1.21.10"/>
    </reaction>
</comment>
<comment type="cofactor">
    <cofactor evidence="1">
        <name>Mg(2+)</name>
        <dbReference type="ChEBI" id="CHEBI:18420"/>
    </cofactor>
    <text evidence="1">Binds 2 Mg(2+) ion per subunit.</text>
</comment>
<comment type="subunit">
    <text evidence="1">Homodimer which binds Holliday junction (HJ) DNA. The HJ becomes 2-fold symmetrical on binding to RuvC with unstacked arms; it has a different conformation from HJ DNA in complex with RuvA. In the full resolvosome a probable DNA-RuvA(4)-RuvB(12)-RuvC(2) complex forms which resolves the HJ.</text>
</comment>
<comment type="subcellular location">
    <subcellularLocation>
        <location evidence="1">Cytoplasm</location>
    </subcellularLocation>
</comment>
<comment type="similarity">
    <text evidence="1">Belongs to the RuvC family.</text>
</comment>
<accession>B1LZP2</accession>
<reference key="1">
    <citation type="submission" date="2008-03" db="EMBL/GenBank/DDBJ databases">
        <title>Complete sequence of chromosome of Methylobacterium radiotolerans JCM 2831.</title>
        <authorList>
            <consortium name="US DOE Joint Genome Institute"/>
            <person name="Copeland A."/>
            <person name="Lucas S."/>
            <person name="Lapidus A."/>
            <person name="Glavina del Rio T."/>
            <person name="Dalin E."/>
            <person name="Tice H."/>
            <person name="Bruce D."/>
            <person name="Goodwin L."/>
            <person name="Pitluck S."/>
            <person name="Kiss H."/>
            <person name="Brettin T."/>
            <person name="Detter J.C."/>
            <person name="Han C."/>
            <person name="Kuske C.R."/>
            <person name="Schmutz J."/>
            <person name="Larimer F."/>
            <person name="Land M."/>
            <person name="Hauser L."/>
            <person name="Kyrpides N."/>
            <person name="Mikhailova N."/>
            <person name="Marx C.J."/>
            <person name="Richardson P."/>
        </authorList>
    </citation>
    <scope>NUCLEOTIDE SEQUENCE [LARGE SCALE GENOMIC DNA]</scope>
    <source>
        <strain>ATCC 27329 / DSM 1819 / JCM 2831 / NBRC 15690 / NCIMB 10815 / 0-1</strain>
    </source>
</reference>
<gene>
    <name evidence="1" type="primary">ruvC</name>
    <name type="ordered locus">Mrad2831_0930</name>
</gene>
<organism>
    <name type="scientific">Methylobacterium radiotolerans (strain ATCC 27329 / DSM 1819 / JCM 2831 / NBRC 15690 / NCIMB 10815 / 0-1)</name>
    <dbReference type="NCBI Taxonomy" id="426355"/>
    <lineage>
        <taxon>Bacteria</taxon>
        <taxon>Pseudomonadati</taxon>
        <taxon>Pseudomonadota</taxon>
        <taxon>Alphaproteobacteria</taxon>
        <taxon>Hyphomicrobiales</taxon>
        <taxon>Methylobacteriaceae</taxon>
        <taxon>Methylobacterium</taxon>
    </lineage>
</organism>
<evidence type="ECO:0000255" key="1">
    <source>
        <dbReference type="HAMAP-Rule" id="MF_00034"/>
    </source>
</evidence>
<dbReference type="EC" id="3.1.21.10" evidence="1"/>
<dbReference type="EMBL" id="CP001001">
    <property type="protein sequence ID" value="ACB22940.1"/>
    <property type="molecule type" value="Genomic_DNA"/>
</dbReference>
<dbReference type="RefSeq" id="WP_012317933.1">
    <property type="nucleotide sequence ID" value="NC_010505.1"/>
</dbReference>
<dbReference type="SMR" id="B1LZP2"/>
<dbReference type="STRING" id="426355.Mrad2831_0930"/>
<dbReference type="GeneID" id="6136946"/>
<dbReference type="KEGG" id="mrd:Mrad2831_0930"/>
<dbReference type="eggNOG" id="COG0817">
    <property type="taxonomic scope" value="Bacteria"/>
</dbReference>
<dbReference type="HOGENOM" id="CLU_091257_1_0_5"/>
<dbReference type="OrthoDB" id="9805499at2"/>
<dbReference type="Proteomes" id="UP000006589">
    <property type="component" value="Chromosome"/>
</dbReference>
<dbReference type="GO" id="GO:0005737">
    <property type="term" value="C:cytoplasm"/>
    <property type="evidence" value="ECO:0007669"/>
    <property type="project" value="UniProtKB-SubCell"/>
</dbReference>
<dbReference type="GO" id="GO:0048476">
    <property type="term" value="C:Holliday junction resolvase complex"/>
    <property type="evidence" value="ECO:0007669"/>
    <property type="project" value="UniProtKB-UniRule"/>
</dbReference>
<dbReference type="GO" id="GO:0008821">
    <property type="term" value="F:crossover junction DNA endonuclease activity"/>
    <property type="evidence" value="ECO:0007669"/>
    <property type="project" value="UniProtKB-UniRule"/>
</dbReference>
<dbReference type="GO" id="GO:0003677">
    <property type="term" value="F:DNA binding"/>
    <property type="evidence" value="ECO:0007669"/>
    <property type="project" value="UniProtKB-KW"/>
</dbReference>
<dbReference type="GO" id="GO:0000287">
    <property type="term" value="F:magnesium ion binding"/>
    <property type="evidence" value="ECO:0007669"/>
    <property type="project" value="UniProtKB-UniRule"/>
</dbReference>
<dbReference type="GO" id="GO:0006310">
    <property type="term" value="P:DNA recombination"/>
    <property type="evidence" value="ECO:0007669"/>
    <property type="project" value="UniProtKB-UniRule"/>
</dbReference>
<dbReference type="GO" id="GO:0006281">
    <property type="term" value="P:DNA repair"/>
    <property type="evidence" value="ECO:0007669"/>
    <property type="project" value="UniProtKB-UniRule"/>
</dbReference>
<dbReference type="CDD" id="cd16962">
    <property type="entry name" value="RuvC"/>
    <property type="match status" value="1"/>
</dbReference>
<dbReference type="FunFam" id="3.30.420.10:FF:000002">
    <property type="entry name" value="Crossover junction endodeoxyribonuclease RuvC"/>
    <property type="match status" value="1"/>
</dbReference>
<dbReference type="Gene3D" id="3.30.420.10">
    <property type="entry name" value="Ribonuclease H-like superfamily/Ribonuclease H"/>
    <property type="match status" value="1"/>
</dbReference>
<dbReference type="HAMAP" id="MF_00034">
    <property type="entry name" value="RuvC"/>
    <property type="match status" value="1"/>
</dbReference>
<dbReference type="InterPro" id="IPR012337">
    <property type="entry name" value="RNaseH-like_sf"/>
</dbReference>
<dbReference type="InterPro" id="IPR036397">
    <property type="entry name" value="RNaseH_sf"/>
</dbReference>
<dbReference type="InterPro" id="IPR020563">
    <property type="entry name" value="X-over_junc_endoDNase_Mg_BS"/>
</dbReference>
<dbReference type="InterPro" id="IPR002176">
    <property type="entry name" value="X-over_junc_endoDNase_RuvC"/>
</dbReference>
<dbReference type="NCBIfam" id="TIGR00228">
    <property type="entry name" value="ruvC"/>
    <property type="match status" value="1"/>
</dbReference>
<dbReference type="PANTHER" id="PTHR30194">
    <property type="entry name" value="CROSSOVER JUNCTION ENDODEOXYRIBONUCLEASE RUVC"/>
    <property type="match status" value="1"/>
</dbReference>
<dbReference type="PANTHER" id="PTHR30194:SF3">
    <property type="entry name" value="CROSSOVER JUNCTION ENDODEOXYRIBONUCLEASE RUVC"/>
    <property type="match status" value="1"/>
</dbReference>
<dbReference type="Pfam" id="PF02075">
    <property type="entry name" value="RuvC"/>
    <property type="match status" value="1"/>
</dbReference>
<dbReference type="PRINTS" id="PR00696">
    <property type="entry name" value="RSOLVASERUVC"/>
</dbReference>
<dbReference type="SUPFAM" id="SSF53098">
    <property type="entry name" value="Ribonuclease H-like"/>
    <property type="match status" value="1"/>
</dbReference>
<dbReference type="PROSITE" id="PS01321">
    <property type="entry name" value="RUVC"/>
    <property type="match status" value="1"/>
</dbReference>
<sequence>MTSPVRILGIDPGLRRTGWGLITAQGTKLTYGDCGVVTSDGELPLALRLRELFEGIGRIVEAVRPDEVAVEETFVNKDAQATLKLGHARAMALLVPALAGLPVFEYAPNLIKKTVAGSGHAEKVQIQAMVRFLLPKAEFRVADAADALAIAITHASHRDAHALRQAHLPGGKRRSLTGQAAAGQGLAGKGFSAAAAARIEAALAKQG</sequence>
<keyword id="KW-0963">Cytoplasm</keyword>
<keyword id="KW-0227">DNA damage</keyword>
<keyword id="KW-0233">DNA recombination</keyword>
<keyword id="KW-0234">DNA repair</keyword>
<keyword id="KW-0238">DNA-binding</keyword>
<keyword id="KW-0255">Endonuclease</keyword>
<keyword id="KW-0378">Hydrolase</keyword>
<keyword id="KW-0460">Magnesium</keyword>
<keyword id="KW-0479">Metal-binding</keyword>
<keyword id="KW-0540">Nuclease</keyword>
<name>RUVC_METRJ</name>
<proteinExistence type="inferred from homology"/>
<feature type="chain" id="PRO_1000090538" description="Crossover junction endodeoxyribonuclease RuvC">
    <location>
        <begin position="1"/>
        <end position="207"/>
    </location>
</feature>
<feature type="active site" evidence="1">
    <location>
        <position position="11"/>
    </location>
</feature>
<feature type="active site" evidence="1">
    <location>
        <position position="71"/>
    </location>
</feature>
<feature type="active site" evidence="1">
    <location>
        <position position="143"/>
    </location>
</feature>
<feature type="binding site" evidence="1">
    <location>
        <position position="11"/>
    </location>
    <ligand>
        <name>Mg(2+)</name>
        <dbReference type="ChEBI" id="CHEBI:18420"/>
        <label>1</label>
    </ligand>
</feature>
<feature type="binding site" evidence="1">
    <location>
        <position position="71"/>
    </location>
    <ligand>
        <name>Mg(2+)</name>
        <dbReference type="ChEBI" id="CHEBI:18420"/>
        <label>2</label>
    </ligand>
</feature>
<feature type="binding site" evidence="1">
    <location>
        <position position="143"/>
    </location>
    <ligand>
        <name>Mg(2+)</name>
        <dbReference type="ChEBI" id="CHEBI:18420"/>
        <label>1</label>
    </ligand>
</feature>